<keyword id="KW-0460">Magnesium</keyword>
<keyword id="KW-0479">Metal-binding</keyword>
<keyword id="KW-1185">Reference proteome</keyword>
<keyword id="KW-0808">Transferase</keyword>
<reference key="1">
    <citation type="journal article" date="1998" name="Science">
        <title>Genome sequence of an obligate intracellular pathogen of humans: Chlamydia trachomatis.</title>
        <authorList>
            <person name="Stephens R.S."/>
            <person name="Kalman S."/>
            <person name="Lammel C.J."/>
            <person name="Fan J."/>
            <person name="Marathe R."/>
            <person name="Aravind L."/>
            <person name="Mitchell W.P."/>
            <person name="Olinger L."/>
            <person name="Tatusov R.L."/>
            <person name="Zhao Q."/>
            <person name="Koonin E.V."/>
            <person name="Davis R.W."/>
        </authorList>
    </citation>
    <scope>NUCLEOTIDE SEQUENCE [LARGE SCALE GENOMIC DNA]</scope>
    <source>
        <strain>ATCC VR-885 / DSM 19411 / UW-3/Cx</strain>
    </source>
</reference>
<sequence length="253" mass="28825">MSLALEQATLIQENLPQGNSLPRHIAIIMDGNRRWQRKHEQFCQKRAISGHRQGADSIPQIVDTALHLGVEALTLFAFSTENFSRSKSEVAELFSLFNSQLRSKLSFLHDREIRLRCIGDLSKLPQELQNNIEQASSATAHYSRMELIFAINYGSKDELVRAFKELHQDLASKKISVNDISEELISSYLDTSGLPDPDLLIRTGGEMRVSNFLLWQIAYTELYVTDVLWPDFTANDLLEAIKTYQQRSRRGGK</sequence>
<evidence type="ECO:0000255" key="1">
    <source>
        <dbReference type="HAMAP-Rule" id="MF_01139"/>
    </source>
</evidence>
<protein>
    <recommendedName>
        <fullName evidence="1">Isoprenyl transferase</fullName>
        <ecNumber evidence="1">2.5.1.-</ecNumber>
    </recommendedName>
</protein>
<proteinExistence type="inferred from homology"/>
<accession>O84456</accession>
<organism>
    <name type="scientific">Chlamydia trachomatis serovar D (strain ATCC VR-885 / DSM 19411 / UW-3/Cx)</name>
    <dbReference type="NCBI Taxonomy" id="272561"/>
    <lineage>
        <taxon>Bacteria</taxon>
        <taxon>Pseudomonadati</taxon>
        <taxon>Chlamydiota</taxon>
        <taxon>Chlamydiia</taxon>
        <taxon>Chlamydiales</taxon>
        <taxon>Chlamydiaceae</taxon>
        <taxon>Chlamydia/Chlamydophila group</taxon>
        <taxon>Chlamydia</taxon>
    </lineage>
</organism>
<comment type="function">
    <text evidence="1">Catalyzes the condensation of isopentenyl diphosphate (IPP) with allylic pyrophosphates generating different type of terpenoids.</text>
</comment>
<comment type="cofactor">
    <cofactor evidence="1">
        <name>Mg(2+)</name>
        <dbReference type="ChEBI" id="CHEBI:18420"/>
    </cofactor>
    <text evidence="1">Binds 2 magnesium ions per subunit.</text>
</comment>
<comment type="subunit">
    <text evidence="1">Homodimer.</text>
</comment>
<comment type="similarity">
    <text evidence="1">Belongs to the UPP synthase family.</text>
</comment>
<name>ISPT_CHLTR</name>
<gene>
    <name evidence="1" type="primary">uppS</name>
    <name type="ordered locus">CT_450</name>
</gene>
<dbReference type="EC" id="2.5.1.-" evidence="1"/>
<dbReference type="EMBL" id="AE001273">
    <property type="protein sequence ID" value="AAC68050.1"/>
    <property type="molecule type" value="Genomic_DNA"/>
</dbReference>
<dbReference type="PIR" id="E71512">
    <property type="entry name" value="E71512"/>
</dbReference>
<dbReference type="RefSeq" id="NP_219963.1">
    <property type="nucleotide sequence ID" value="NC_000117.1"/>
</dbReference>
<dbReference type="RefSeq" id="WP_009871807.1">
    <property type="nucleotide sequence ID" value="NC_000117.1"/>
</dbReference>
<dbReference type="SMR" id="O84456"/>
<dbReference type="FunCoup" id="O84456">
    <property type="interactions" value="231"/>
</dbReference>
<dbReference type="STRING" id="272561.CT_450"/>
<dbReference type="EnsemblBacteria" id="AAC68050">
    <property type="protein sequence ID" value="AAC68050"/>
    <property type="gene ID" value="CT_450"/>
</dbReference>
<dbReference type="GeneID" id="884224"/>
<dbReference type="KEGG" id="ctr:CT_450"/>
<dbReference type="PATRIC" id="fig|272561.5.peg.487"/>
<dbReference type="HOGENOM" id="CLU_038505_1_1_0"/>
<dbReference type="InParanoid" id="O84456"/>
<dbReference type="OrthoDB" id="4191603at2"/>
<dbReference type="Proteomes" id="UP000000431">
    <property type="component" value="Chromosome"/>
</dbReference>
<dbReference type="GO" id="GO:0000287">
    <property type="term" value="F:magnesium ion binding"/>
    <property type="evidence" value="ECO:0007669"/>
    <property type="project" value="UniProtKB-UniRule"/>
</dbReference>
<dbReference type="GO" id="GO:0004659">
    <property type="term" value="F:prenyltransferase activity"/>
    <property type="evidence" value="ECO:0007669"/>
    <property type="project" value="UniProtKB-UniRule"/>
</dbReference>
<dbReference type="GO" id="GO:0016094">
    <property type="term" value="P:polyprenol biosynthetic process"/>
    <property type="evidence" value="ECO:0000318"/>
    <property type="project" value="GO_Central"/>
</dbReference>
<dbReference type="CDD" id="cd00475">
    <property type="entry name" value="Cis_IPPS"/>
    <property type="match status" value="1"/>
</dbReference>
<dbReference type="FunFam" id="3.40.1180.10:FF:000003">
    <property type="entry name" value="Isoprenyl transferase 2"/>
    <property type="match status" value="1"/>
</dbReference>
<dbReference type="Gene3D" id="3.40.1180.10">
    <property type="entry name" value="Decaprenyl diphosphate synthase-like"/>
    <property type="match status" value="1"/>
</dbReference>
<dbReference type="HAMAP" id="MF_01139">
    <property type="entry name" value="ISPT"/>
    <property type="match status" value="1"/>
</dbReference>
<dbReference type="InterPro" id="IPR001441">
    <property type="entry name" value="UPP_synth-like"/>
</dbReference>
<dbReference type="InterPro" id="IPR018520">
    <property type="entry name" value="UPP_synth-like_CS"/>
</dbReference>
<dbReference type="InterPro" id="IPR036424">
    <property type="entry name" value="UPP_synth-like_sf"/>
</dbReference>
<dbReference type="NCBIfam" id="NF011413">
    <property type="entry name" value="PRK14840.1"/>
    <property type="match status" value="1"/>
</dbReference>
<dbReference type="NCBIfam" id="TIGR00055">
    <property type="entry name" value="uppS"/>
    <property type="match status" value="1"/>
</dbReference>
<dbReference type="PANTHER" id="PTHR10291:SF0">
    <property type="entry name" value="DEHYDRODOLICHYL DIPHOSPHATE SYNTHASE 2"/>
    <property type="match status" value="1"/>
</dbReference>
<dbReference type="PANTHER" id="PTHR10291">
    <property type="entry name" value="DEHYDRODOLICHYL DIPHOSPHATE SYNTHASE FAMILY MEMBER"/>
    <property type="match status" value="1"/>
</dbReference>
<dbReference type="Pfam" id="PF01255">
    <property type="entry name" value="Prenyltransf"/>
    <property type="match status" value="1"/>
</dbReference>
<dbReference type="SUPFAM" id="SSF64005">
    <property type="entry name" value="Undecaprenyl diphosphate synthase"/>
    <property type="match status" value="1"/>
</dbReference>
<dbReference type="PROSITE" id="PS01066">
    <property type="entry name" value="UPP_SYNTHASE"/>
    <property type="match status" value="1"/>
</dbReference>
<feature type="chain" id="PRO_0000123596" description="Isoprenyl transferase">
    <location>
        <begin position="1"/>
        <end position="253"/>
    </location>
</feature>
<feature type="active site" evidence="1">
    <location>
        <position position="30"/>
    </location>
</feature>
<feature type="active site" description="Proton acceptor" evidence="1">
    <location>
        <position position="82"/>
    </location>
</feature>
<feature type="binding site" evidence="1">
    <location>
        <position position="30"/>
    </location>
    <ligand>
        <name>Mg(2+)</name>
        <dbReference type="ChEBI" id="CHEBI:18420"/>
    </ligand>
</feature>
<feature type="binding site" evidence="1">
    <location>
        <begin position="31"/>
        <end position="34"/>
    </location>
    <ligand>
        <name>substrate</name>
    </ligand>
</feature>
<feature type="binding site" evidence="1">
    <location>
        <position position="35"/>
    </location>
    <ligand>
        <name>substrate</name>
    </ligand>
</feature>
<feature type="binding site" evidence="1">
    <location>
        <position position="51"/>
    </location>
    <ligand>
        <name>substrate</name>
    </ligand>
</feature>
<feature type="binding site" evidence="1">
    <location>
        <begin position="79"/>
        <end position="81"/>
    </location>
    <ligand>
        <name>substrate</name>
    </ligand>
</feature>
<feature type="binding site" evidence="1">
    <location>
        <position position="83"/>
    </location>
    <ligand>
        <name>substrate</name>
    </ligand>
</feature>
<feature type="binding site" evidence="1">
    <location>
        <position position="85"/>
    </location>
    <ligand>
        <name>substrate</name>
    </ligand>
</feature>
<feature type="binding site" evidence="1">
    <location>
        <position position="202"/>
    </location>
    <ligand>
        <name>substrate</name>
    </ligand>
</feature>
<feature type="binding site" evidence="1">
    <location>
        <begin position="208"/>
        <end position="210"/>
    </location>
    <ligand>
        <name>substrate</name>
    </ligand>
</feature>
<feature type="binding site" evidence="1">
    <location>
        <position position="221"/>
    </location>
    <ligand>
        <name>Mg(2+)</name>
        <dbReference type="ChEBI" id="CHEBI:18420"/>
    </ligand>
</feature>